<comment type="function">
    <text evidence="1">Suppressor of viral-induced RNA silencing.</text>
</comment>
<comment type="similarity">
    <text evidence="3">Belongs to the tobamoviruses movement protein family.</text>
</comment>
<name>MP_ACLSA</name>
<feature type="chain" id="PRO_0000222544" description="Putative movement protein">
    <location>
        <begin position="1"/>
        <end position="457"/>
    </location>
</feature>
<feature type="region of interest" description="Disordered" evidence="2">
    <location>
        <begin position="265"/>
        <end position="284"/>
    </location>
</feature>
<feature type="region of interest" description="Disordered" evidence="2">
    <location>
        <begin position="293"/>
        <end position="312"/>
    </location>
</feature>
<feature type="region of interest" description="Disordered" evidence="2">
    <location>
        <begin position="345"/>
        <end position="457"/>
    </location>
</feature>
<feature type="compositionally biased region" description="Gly residues" evidence="2">
    <location>
        <begin position="411"/>
        <end position="426"/>
    </location>
</feature>
<feature type="compositionally biased region" description="Basic and acidic residues" evidence="2">
    <location>
        <begin position="448"/>
        <end position="457"/>
    </location>
</feature>
<sequence>MMIRGHKLKIAEGDIPIAGVKSSRIYSDVSPFRKASDLMIHWNEFVFKVMPEDIAGDGFRLASIPVIPSSEVQAVLRKRESTNYVHWGALSISIDALFRKNAGVSGWCYVYDNRWETFEQAMLQKFRFNLDSGSATLVTSPNFPVSLDDPGLSNSISVAVMFENLNFKLESYPISVRVGNMCRFFDSFLSCVKNKVDSNFLLEAANADPLGAGAFGFEQDDQVSELFNYIQTVPTQAIKSREHEVPRGLFGMMGKKKVKSFEFASGSRNLGRRKPQRGRPLERSASLRVAPGFRSQDERVEHQGLSTDSDFENFLRKGKGKAGTESITSEGSSFDNISAREFQFARQDQKAKDGGSAEPPIKSGRRSESVPGRRRQTPSWKDRGNSGTDTGGHLREHSDTGDLGTNRVPGRAGGGEIHGGSEGGGVIQSEGGSRFDQNIQDYIFGPEYKQHDLPPSV</sequence>
<protein>
    <recommendedName>
        <fullName>Putative movement protein</fullName>
    </recommendedName>
    <alternativeName>
        <fullName>50.4 kDa protein</fullName>
    </alternativeName>
    <alternativeName>
        <fullName>ORF2 protein</fullName>
    </alternativeName>
</protein>
<accession>P54892</accession>
<dbReference type="EMBL" id="D14996">
    <property type="protein sequence ID" value="BAA03642.1"/>
    <property type="molecule type" value="Genomic_RNA"/>
</dbReference>
<dbReference type="PIR" id="JQ2184">
    <property type="entry name" value="JQ2184"/>
</dbReference>
<dbReference type="Proteomes" id="UP000000397">
    <property type="component" value="Genome"/>
</dbReference>
<dbReference type="GO" id="GO:0004252">
    <property type="term" value="F:serine-type endopeptidase activity"/>
    <property type="evidence" value="ECO:0007669"/>
    <property type="project" value="InterPro"/>
</dbReference>
<dbReference type="GO" id="GO:0006508">
    <property type="term" value="P:proteolysis"/>
    <property type="evidence" value="ECO:0007669"/>
    <property type="project" value="InterPro"/>
</dbReference>
<dbReference type="GO" id="GO:0052170">
    <property type="term" value="P:symbiont-mediated suppression of host innate immune response"/>
    <property type="evidence" value="ECO:0007669"/>
    <property type="project" value="UniProtKB-KW"/>
</dbReference>
<dbReference type="GO" id="GO:0046740">
    <property type="term" value="P:transport of virus in host, cell to cell"/>
    <property type="evidence" value="ECO:0007669"/>
    <property type="project" value="UniProtKB-KW"/>
</dbReference>
<dbReference type="InterPro" id="IPR001815">
    <property type="entry name" value="Trichovirus_mp"/>
</dbReference>
<dbReference type="InterPro" id="IPR028919">
    <property type="entry name" value="Viral_movement"/>
</dbReference>
<dbReference type="Pfam" id="PF01107">
    <property type="entry name" value="MP"/>
    <property type="match status" value="1"/>
</dbReference>
<dbReference type="PRINTS" id="PR00995">
    <property type="entry name" value="CAPILLOPTASE"/>
</dbReference>
<keyword id="KW-0945">Host-virus interaction</keyword>
<keyword id="KW-1090">Inhibition of host innate immune response by virus</keyword>
<keyword id="KW-0941">Suppressor of RNA silencing</keyword>
<keyword id="KW-0813">Transport</keyword>
<keyword id="KW-0899">Viral immunoevasion</keyword>
<keyword id="KW-0916">Viral movement protein</keyword>
<evidence type="ECO:0000250" key="1"/>
<evidence type="ECO:0000256" key="2">
    <source>
        <dbReference type="SAM" id="MobiDB-lite"/>
    </source>
</evidence>
<evidence type="ECO:0000305" key="3"/>
<proteinExistence type="inferred from homology"/>
<organismHost>
    <name type="scientific">Crataegus</name>
    <name type="common">hawthorn</name>
    <dbReference type="NCBI Taxonomy" id="23159"/>
</organismHost>
<organismHost>
    <name type="scientific">Cydonia oblonga</name>
    <name type="common">Quince</name>
    <name type="synonym">Pyrus cydonia</name>
    <dbReference type="NCBI Taxonomy" id="36610"/>
</organismHost>
<organismHost>
    <name type="scientific">Malus sylvestris</name>
    <name type="common">European crab apple</name>
    <dbReference type="NCBI Taxonomy" id="3752"/>
</organismHost>
<organismHost>
    <name type="scientific">Prunus armeniaca</name>
    <name type="common">Apricot</name>
    <name type="synonym">Armeniaca vulgaris</name>
    <dbReference type="NCBI Taxonomy" id="36596"/>
</organismHost>
<organismHost>
    <name type="scientific">Prunus domestica</name>
    <name type="common">Garden plum</name>
    <dbReference type="NCBI Taxonomy" id="3758"/>
</organismHost>
<organismHost>
    <name type="scientific">Prunus persica</name>
    <name type="common">Peach</name>
    <name type="synonym">Amygdalus persica</name>
    <dbReference type="NCBI Taxonomy" id="3760"/>
</organismHost>
<organismHost>
    <name type="scientific">Prunus spinosa</name>
    <name type="common">Blackthorn</name>
    <name type="synonym">Prunus domestica var. spinosa</name>
    <dbReference type="NCBI Taxonomy" id="114937"/>
</organismHost>
<organismHost>
    <name type="scientific">Pyrus communis</name>
    <name type="common">Pear</name>
    <name type="synonym">Pyrus domestica</name>
    <dbReference type="NCBI Taxonomy" id="23211"/>
</organismHost>
<organism>
    <name type="scientific">Apple chlorotic leaf spot virus (isolate apple)</name>
    <name type="common">ACLSV</name>
    <dbReference type="NCBI Taxonomy" id="73472"/>
    <lineage>
        <taxon>Viruses</taxon>
        <taxon>Riboviria</taxon>
        <taxon>Orthornavirae</taxon>
        <taxon>Kitrinoviricota</taxon>
        <taxon>Alsuviricetes</taxon>
        <taxon>Tymovirales</taxon>
        <taxon>Betaflexiviridae</taxon>
        <taxon>Trivirinae</taxon>
        <taxon>Trichovirus</taxon>
        <taxon>Trichovirus mali</taxon>
    </lineage>
</organism>
<reference key="1">
    <citation type="journal article" date="1993" name="J. Gen. Virol.">
        <title>Complete nucleotide sequence of the genome of an apple isolate of apple chlorotic leaf spot virus.</title>
        <authorList>
            <person name="Sato K."/>
            <person name="Yoshikawa N."/>
            <person name="Takahashi T."/>
        </authorList>
    </citation>
    <scope>NUCLEOTIDE SEQUENCE [GENOMIC RNA]</scope>
</reference>